<name>HIS2_RUTMC</name>
<reference key="1">
    <citation type="journal article" date="2007" name="Science">
        <title>The Calyptogena magnifica chemoautotrophic symbiont genome.</title>
        <authorList>
            <person name="Newton I.L.G."/>
            <person name="Woyke T."/>
            <person name="Auchtung T.A."/>
            <person name="Dilly G.F."/>
            <person name="Dutton R.J."/>
            <person name="Fisher M.C."/>
            <person name="Fontanez K.M."/>
            <person name="Lau E."/>
            <person name="Stewart F.J."/>
            <person name="Richardson P.M."/>
            <person name="Barry K.W."/>
            <person name="Saunders E."/>
            <person name="Detter J.C."/>
            <person name="Wu D."/>
            <person name="Eisen J.A."/>
            <person name="Cavanaugh C.M."/>
        </authorList>
    </citation>
    <scope>NUCLEOTIDE SEQUENCE [LARGE SCALE GENOMIC DNA]</scope>
</reference>
<evidence type="ECO:0000255" key="1">
    <source>
        <dbReference type="HAMAP-Rule" id="MF_01020"/>
    </source>
</evidence>
<sequence>MNDILIKLEQVLEQRKSAKVDESYISSLYNKGTDEILKKIAEESAEVIMAAKDGVNDKIIYEVADLWFHTLVLLRFKEIKVNQITNELSRRFGLSGLQEKAKRNN</sequence>
<dbReference type="EC" id="3.6.1.31" evidence="1"/>
<dbReference type="EMBL" id="CP000488">
    <property type="protein sequence ID" value="ABL02069.1"/>
    <property type="molecule type" value="Genomic_DNA"/>
</dbReference>
<dbReference type="RefSeq" id="WP_011737694.1">
    <property type="nucleotide sequence ID" value="NC_008610.1"/>
</dbReference>
<dbReference type="SMR" id="A1AVW2"/>
<dbReference type="STRING" id="413404.Rmag_0288"/>
<dbReference type="KEGG" id="rma:Rmag_0288"/>
<dbReference type="eggNOG" id="COG0140">
    <property type="taxonomic scope" value="Bacteria"/>
</dbReference>
<dbReference type="HOGENOM" id="CLU_123337_1_2_6"/>
<dbReference type="OrthoDB" id="9814738at2"/>
<dbReference type="UniPathway" id="UPA00031">
    <property type="reaction ID" value="UER00007"/>
</dbReference>
<dbReference type="Proteomes" id="UP000002587">
    <property type="component" value="Chromosome"/>
</dbReference>
<dbReference type="GO" id="GO:0005737">
    <property type="term" value="C:cytoplasm"/>
    <property type="evidence" value="ECO:0007669"/>
    <property type="project" value="UniProtKB-SubCell"/>
</dbReference>
<dbReference type="GO" id="GO:0005524">
    <property type="term" value="F:ATP binding"/>
    <property type="evidence" value="ECO:0007669"/>
    <property type="project" value="UniProtKB-KW"/>
</dbReference>
<dbReference type="GO" id="GO:0004636">
    <property type="term" value="F:phosphoribosyl-ATP diphosphatase activity"/>
    <property type="evidence" value="ECO:0007669"/>
    <property type="project" value="UniProtKB-UniRule"/>
</dbReference>
<dbReference type="GO" id="GO:0000105">
    <property type="term" value="P:L-histidine biosynthetic process"/>
    <property type="evidence" value="ECO:0007669"/>
    <property type="project" value="UniProtKB-UniRule"/>
</dbReference>
<dbReference type="CDD" id="cd11534">
    <property type="entry name" value="NTP-PPase_HisIE_like"/>
    <property type="match status" value="1"/>
</dbReference>
<dbReference type="Gene3D" id="1.10.287.1080">
    <property type="entry name" value="MazG-like"/>
    <property type="match status" value="1"/>
</dbReference>
<dbReference type="HAMAP" id="MF_01020">
    <property type="entry name" value="HisE"/>
    <property type="match status" value="1"/>
</dbReference>
<dbReference type="InterPro" id="IPR008179">
    <property type="entry name" value="HisE"/>
</dbReference>
<dbReference type="InterPro" id="IPR021130">
    <property type="entry name" value="PRib-ATP_PPHydrolase-like"/>
</dbReference>
<dbReference type="NCBIfam" id="TIGR03188">
    <property type="entry name" value="histidine_hisI"/>
    <property type="match status" value="1"/>
</dbReference>
<dbReference type="NCBIfam" id="NF001611">
    <property type="entry name" value="PRK00400.1-3"/>
    <property type="match status" value="1"/>
</dbReference>
<dbReference type="PANTHER" id="PTHR42945">
    <property type="entry name" value="HISTIDINE BIOSYNTHESIS BIFUNCTIONAL PROTEIN"/>
    <property type="match status" value="1"/>
</dbReference>
<dbReference type="PANTHER" id="PTHR42945:SF9">
    <property type="entry name" value="HISTIDINE BIOSYNTHESIS BIFUNCTIONAL PROTEIN HISIE"/>
    <property type="match status" value="1"/>
</dbReference>
<dbReference type="Pfam" id="PF01503">
    <property type="entry name" value="PRA-PH"/>
    <property type="match status" value="1"/>
</dbReference>
<dbReference type="SUPFAM" id="SSF101386">
    <property type="entry name" value="all-alpha NTP pyrophosphatases"/>
    <property type="match status" value="1"/>
</dbReference>
<protein>
    <recommendedName>
        <fullName evidence="1">Phosphoribosyl-ATP pyrophosphatase</fullName>
        <shortName evidence="1">PRA-PH</shortName>
        <ecNumber evidence="1">3.6.1.31</ecNumber>
    </recommendedName>
</protein>
<keyword id="KW-0028">Amino-acid biosynthesis</keyword>
<keyword id="KW-0067">ATP-binding</keyword>
<keyword id="KW-0963">Cytoplasm</keyword>
<keyword id="KW-0368">Histidine biosynthesis</keyword>
<keyword id="KW-0378">Hydrolase</keyword>
<keyword id="KW-0547">Nucleotide-binding</keyword>
<accession>A1AVW2</accession>
<comment type="catalytic activity">
    <reaction evidence="1">
        <text>1-(5-phospho-beta-D-ribosyl)-ATP + H2O = 1-(5-phospho-beta-D-ribosyl)-5'-AMP + diphosphate + H(+)</text>
        <dbReference type="Rhea" id="RHEA:22828"/>
        <dbReference type="ChEBI" id="CHEBI:15377"/>
        <dbReference type="ChEBI" id="CHEBI:15378"/>
        <dbReference type="ChEBI" id="CHEBI:33019"/>
        <dbReference type="ChEBI" id="CHEBI:59457"/>
        <dbReference type="ChEBI" id="CHEBI:73183"/>
        <dbReference type="EC" id="3.6.1.31"/>
    </reaction>
</comment>
<comment type="pathway">
    <text evidence="1">Amino-acid biosynthesis; L-histidine biosynthesis; L-histidine from 5-phospho-alpha-D-ribose 1-diphosphate: step 2/9.</text>
</comment>
<comment type="subcellular location">
    <subcellularLocation>
        <location evidence="1">Cytoplasm</location>
    </subcellularLocation>
</comment>
<comment type="similarity">
    <text evidence="1">Belongs to the PRA-PH family.</text>
</comment>
<organism>
    <name type="scientific">Ruthia magnifica subsp. Calyptogena magnifica</name>
    <dbReference type="NCBI Taxonomy" id="413404"/>
    <lineage>
        <taxon>Bacteria</taxon>
        <taxon>Pseudomonadati</taxon>
        <taxon>Pseudomonadota</taxon>
        <taxon>Gammaproteobacteria</taxon>
        <taxon>Candidatus Pseudothioglobaceae</taxon>
        <taxon>Candidatus Ruthturnera</taxon>
    </lineage>
</organism>
<proteinExistence type="inferred from homology"/>
<feature type="chain" id="PRO_1000190390" description="Phosphoribosyl-ATP pyrophosphatase">
    <location>
        <begin position="1"/>
        <end position="105"/>
    </location>
</feature>
<gene>
    <name evidence="1" type="primary">hisE</name>
    <name type="ordered locus">Rmag_0288</name>
</gene>